<proteinExistence type="evidence at transcript level"/>
<keyword id="KW-0238">DNA-binding</keyword>
<keyword id="KW-0539">Nucleus</keyword>
<keyword id="KW-1185">Reference proteome</keyword>
<keyword id="KW-0677">Repeat</keyword>
<keyword id="KW-0804">Transcription</keyword>
<keyword id="KW-0805">Transcription regulation</keyword>
<organism>
    <name type="scientific">Arabidopsis thaliana</name>
    <name type="common">Mouse-ear cress</name>
    <dbReference type="NCBI Taxonomy" id="3702"/>
    <lineage>
        <taxon>Eukaryota</taxon>
        <taxon>Viridiplantae</taxon>
        <taxon>Streptophyta</taxon>
        <taxon>Embryophyta</taxon>
        <taxon>Tracheophyta</taxon>
        <taxon>Spermatophyta</taxon>
        <taxon>Magnoliopsida</taxon>
        <taxon>eudicotyledons</taxon>
        <taxon>Gunneridae</taxon>
        <taxon>Pentapetalae</taxon>
        <taxon>rosids</taxon>
        <taxon>malvids</taxon>
        <taxon>Brassicales</taxon>
        <taxon>Brassicaceae</taxon>
        <taxon>Camelineae</taxon>
        <taxon>Arabidopsis</taxon>
    </lineage>
</organism>
<gene>
    <name evidence="4" type="primary">MYB1</name>
    <name evidence="5" type="ordered locus">At3g09230</name>
    <name evidence="6" type="ORF">F3L24.10</name>
</gene>
<accession>Q42575</accession>
<protein>
    <recommendedName>
        <fullName evidence="4">Transcription factor MYB1</fullName>
    </recommendedName>
    <alternativeName>
        <fullName evidence="4">Myb-related protein 1</fullName>
        <shortName evidence="4">AtMYB1</shortName>
    </alternativeName>
</protein>
<dbReference type="EMBL" id="D10936">
    <property type="protein sequence ID" value="BAA01730.1"/>
    <property type="molecule type" value="Genomic_DNA"/>
</dbReference>
<dbReference type="EMBL" id="AY550295">
    <property type="protein sequence ID" value="AAS58506.1"/>
    <property type="molecule type" value="mRNA"/>
</dbReference>
<dbReference type="EMBL" id="AC011436">
    <property type="protein sequence ID" value="AAF14022.1"/>
    <property type="molecule type" value="Genomic_DNA"/>
</dbReference>
<dbReference type="EMBL" id="CP002686">
    <property type="protein sequence ID" value="AEE74740.1"/>
    <property type="molecule type" value="Genomic_DNA"/>
</dbReference>
<dbReference type="EMBL" id="BT026429">
    <property type="protein sequence ID" value="ABH04536.1"/>
    <property type="molecule type" value="mRNA"/>
</dbReference>
<dbReference type="PIR" id="S22520">
    <property type="entry name" value="S22520"/>
</dbReference>
<dbReference type="RefSeq" id="NP_187534.1">
    <property type="nucleotide sequence ID" value="NM_111757.4"/>
</dbReference>
<dbReference type="SMR" id="Q42575"/>
<dbReference type="FunCoup" id="Q42575">
    <property type="interactions" value="65"/>
</dbReference>
<dbReference type="IntAct" id="Q42575">
    <property type="interactions" value="4"/>
</dbReference>
<dbReference type="STRING" id="3702.Q42575"/>
<dbReference type="PaxDb" id="3702-AT3G09230.1"/>
<dbReference type="ProteomicsDB" id="251219"/>
<dbReference type="EnsemblPlants" id="AT3G09230.1">
    <property type="protein sequence ID" value="AT3G09230.1"/>
    <property type="gene ID" value="AT3G09230"/>
</dbReference>
<dbReference type="GeneID" id="820079"/>
<dbReference type="Gramene" id="AT3G09230.1">
    <property type="protein sequence ID" value="AT3G09230.1"/>
    <property type="gene ID" value="AT3G09230"/>
</dbReference>
<dbReference type="KEGG" id="ath:AT3G09230"/>
<dbReference type="Araport" id="AT3G09230"/>
<dbReference type="TAIR" id="AT3G09230">
    <property type="gene designation" value="MYB1"/>
</dbReference>
<dbReference type="eggNOG" id="KOG0048">
    <property type="taxonomic scope" value="Eukaryota"/>
</dbReference>
<dbReference type="HOGENOM" id="CLU_047891_1_0_1"/>
<dbReference type="InParanoid" id="Q42575"/>
<dbReference type="OMA" id="NWMTIAR"/>
<dbReference type="OrthoDB" id="2143914at2759"/>
<dbReference type="PhylomeDB" id="Q42575"/>
<dbReference type="PRO" id="PR:Q42575"/>
<dbReference type="Proteomes" id="UP000006548">
    <property type="component" value="Chromosome 3"/>
</dbReference>
<dbReference type="ExpressionAtlas" id="Q42575">
    <property type="expression patterns" value="baseline and differential"/>
</dbReference>
<dbReference type="GO" id="GO:0005829">
    <property type="term" value="C:cytosol"/>
    <property type="evidence" value="ECO:0000314"/>
    <property type="project" value="TAIR"/>
</dbReference>
<dbReference type="GO" id="GO:0005634">
    <property type="term" value="C:nucleus"/>
    <property type="evidence" value="ECO:0007669"/>
    <property type="project" value="UniProtKB-SubCell"/>
</dbReference>
<dbReference type="GO" id="GO:0003700">
    <property type="term" value="F:DNA-binding transcription factor activity"/>
    <property type="evidence" value="ECO:0000250"/>
    <property type="project" value="TAIR"/>
</dbReference>
<dbReference type="GO" id="GO:0000976">
    <property type="term" value="F:transcription cis-regulatory region binding"/>
    <property type="evidence" value="ECO:0000353"/>
    <property type="project" value="TAIR"/>
</dbReference>
<dbReference type="CDD" id="cd00167">
    <property type="entry name" value="SANT"/>
    <property type="match status" value="2"/>
</dbReference>
<dbReference type="FunFam" id="1.10.10.60:FF:000060">
    <property type="entry name" value="MYB transcription factor"/>
    <property type="match status" value="1"/>
</dbReference>
<dbReference type="Gene3D" id="1.10.10.60">
    <property type="entry name" value="Homeodomain-like"/>
    <property type="match status" value="2"/>
</dbReference>
<dbReference type="InterPro" id="IPR009057">
    <property type="entry name" value="Homeodomain-like_sf"/>
</dbReference>
<dbReference type="InterPro" id="IPR017930">
    <property type="entry name" value="Myb_dom"/>
</dbReference>
<dbReference type="InterPro" id="IPR050560">
    <property type="entry name" value="MYB_TF"/>
</dbReference>
<dbReference type="InterPro" id="IPR001005">
    <property type="entry name" value="SANT/Myb"/>
</dbReference>
<dbReference type="PANTHER" id="PTHR45614:SF25">
    <property type="entry name" value="MYB PROTEIN"/>
    <property type="match status" value="1"/>
</dbReference>
<dbReference type="PANTHER" id="PTHR45614">
    <property type="entry name" value="MYB PROTEIN-RELATED"/>
    <property type="match status" value="1"/>
</dbReference>
<dbReference type="Pfam" id="PF00249">
    <property type="entry name" value="Myb_DNA-binding"/>
    <property type="match status" value="2"/>
</dbReference>
<dbReference type="SMART" id="SM00717">
    <property type="entry name" value="SANT"/>
    <property type="match status" value="2"/>
</dbReference>
<dbReference type="SUPFAM" id="SSF46689">
    <property type="entry name" value="Homeodomain-like"/>
    <property type="match status" value="1"/>
</dbReference>
<dbReference type="PROSITE" id="PS51294">
    <property type="entry name" value="HTH_MYB"/>
    <property type="match status" value="2"/>
</dbReference>
<sequence>MEAEIVRRSEVTGLRREVEESSIGRGDCDGDGGDVGEDAAGFVGTSGRGRRDRVKGPWSKEEDDVLSELVKRLGARNWSFIARSIPGRSGKSCRLRWCNQLNPNLIRNSFTEVEDQAIIAAHAIHGNKWAVIAKLLPGRTDNAIKNHWNSALRRRFIDFEKAKNIGTGSLVVDDSGFDRTTTVASSEETLSSGGGCHVTTPIVSPEGKEATTSMEMSEEQCVEKTNGEGISRQDDKDPPTLFRPVPRLSSFNACNHMEGSPSPHIQDQNQLQSSKQDAAMLRLLEGAYSERFVPQTCGGGCCSNNPDGSFQQESLLGPEFVDYLDSPTFPSSELAAIATEIGSLAWLRSGLESSSVRVMEDAVGRLRPQGSRGHRDHYLVSEQGTNITNVLST</sequence>
<feature type="chain" id="PRO_0000438823" description="Transcription factor MYB1">
    <location>
        <begin position="1"/>
        <end position="393"/>
    </location>
</feature>
<feature type="domain" description="HTH myb-type 1" evidence="1">
    <location>
        <begin position="50"/>
        <end position="105"/>
    </location>
</feature>
<feature type="domain" description="HTH myb-type 2" evidence="1">
    <location>
        <begin position="106"/>
        <end position="156"/>
    </location>
</feature>
<feature type="DNA-binding region" description="H-T-H motif" evidence="1">
    <location>
        <begin position="78"/>
        <end position="101"/>
    </location>
</feature>
<feature type="DNA-binding region" description="H-T-H motif" evidence="1">
    <location>
        <begin position="129"/>
        <end position="152"/>
    </location>
</feature>
<feature type="region of interest" description="Disordered" evidence="2">
    <location>
        <begin position="1"/>
        <end position="57"/>
    </location>
</feature>
<feature type="region of interest" description="Disordered" evidence="2">
    <location>
        <begin position="185"/>
        <end position="274"/>
    </location>
</feature>
<feature type="compositionally biased region" description="Basic and acidic residues" evidence="2">
    <location>
        <begin position="1"/>
        <end position="19"/>
    </location>
</feature>
<feature type="compositionally biased region" description="Basic and acidic residues" evidence="2">
    <location>
        <begin position="221"/>
        <end position="238"/>
    </location>
</feature>
<feature type="compositionally biased region" description="Polar residues" evidence="2">
    <location>
        <begin position="263"/>
        <end position="274"/>
    </location>
</feature>
<name>MYB1_ARATH</name>
<comment type="subcellular location">
    <subcellularLocation>
        <location evidence="1">Nucleus</location>
    </subcellularLocation>
</comment>
<comment type="induction">
    <text evidence="3">Slightly induced by salicylic acid.</text>
</comment>
<evidence type="ECO:0000255" key="1">
    <source>
        <dbReference type="PROSITE-ProRule" id="PRU00625"/>
    </source>
</evidence>
<evidence type="ECO:0000256" key="2">
    <source>
        <dbReference type="SAM" id="MobiDB-lite"/>
    </source>
</evidence>
<evidence type="ECO:0000269" key="3">
    <source>
    </source>
</evidence>
<evidence type="ECO:0000303" key="4">
    <source>
    </source>
</evidence>
<evidence type="ECO:0000312" key="5">
    <source>
        <dbReference type="Araport" id="AT3G09230"/>
    </source>
</evidence>
<evidence type="ECO:0000312" key="6">
    <source>
        <dbReference type="EMBL" id="AAF14022.1"/>
    </source>
</evidence>
<reference key="1">
    <citation type="journal article" date="1992" name="Plant Mol. Biol.">
        <title>Nucleotide sequence of a gene from Arabidopsis thaliana encoding a myb homologue.</title>
        <authorList>
            <person name="Shinozaki K."/>
            <person name="Yamaguchi-Shinozaki K."/>
            <person name="Urao T."/>
            <person name="Koizumi M."/>
        </authorList>
    </citation>
    <scope>NUCLEOTIDE SEQUENCE [MRNA]</scope>
    <source>
        <strain>cv. Columbia</strain>
    </source>
</reference>
<reference key="2">
    <citation type="submission" date="2004-02" db="EMBL/GenBank/DDBJ databases">
        <title>The MYB transcription factor family in Arabidopsis: A genome-wide cloning and expression pattern analysis.</title>
        <authorList>
            <person name="Qu L."/>
            <person name="Gu H."/>
        </authorList>
    </citation>
    <scope>NUCLEOTIDE SEQUENCE [MRNA]</scope>
</reference>
<reference key="3">
    <citation type="journal article" date="2000" name="Nature">
        <title>Sequence and analysis of chromosome 3 of the plant Arabidopsis thaliana.</title>
        <authorList>
            <person name="Salanoubat M."/>
            <person name="Lemcke K."/>
            <person name="Rieger M."/>
            <person name="Ansorge W."/>
            <person name="Unseld M."/>
            <person name="Fartmann B."/>
            <person name="Valle G."/>
            <person name="Bloecker H."/>
            <person name="Perez-Alonso M."/>
            <person name="Obermaier B."/>
            <person name="Delseny M."/>
            <person name="Boutry M."/>
            <person name="Grivell L.A."/>
            <person name="Mache R."/>
            <person name="Puigdomenech P."/>
            <person name="De Simone V."/>
            <person name="Choisne N."/>
            <person name="Artiguenave F."/>
            <person name="Robert C."/>
            <person name="Brottier P."/>
            <person name="Wincker P."/>
            <person name="Cattolico L."/>
            <person name="Weissenbach J."/>
            <person name="Saurin W."/>
            <person name="Quetier F."/>
            <person name="Schaefer M."/>
            <person name="Mueller-Auer S."/>
            <person name="Gabel C."/>
            <person name="Fuchs M."/>
            <person name="Benes V."/>
            <person name="Wurmbach E."/>
            <person name="Drzonek H."/>
            <person name="Erfle H."/>
            <person name="Jordan N."/>
            <person name="Bangert S."/>
            <person name="Wiedelmann R."/>
            <person name="Kranz H."/>
            <person name="Voss H."/>
            <person name="Holland R."/>
            <person name="Brandt P."/>
            <person name="Nyakatura G."/>
            <person name="Vezzi A."/>
            <person name="D'Angelo M."/>
            <person name="Pallavicini A."/>
            <person name="Toppo S."/>
            <person name="Simionati B."/>
            <person name="Conrad A."/>
            <person name="Hornischer K."/>
            <person name="Kauer G."/>
            <person name="Loehnert T.-H."/>
            <person name="Nordsiek G."/>
            <person name="Reichelt J."/>
            <person name="Scharfe M."/>
            <person name="Schoen O."/>
            <person name="Bargues M."/>
            <person name="Terol J."/>
            <person name="Climent J."/>
            <person name="Navarro P."/>
            <person name="Collado C."/>
            <person name="Perez-Perez A."/>
            <person name="Ottenwaelder B."/>
            <person name="Duchemin D."/>
            <person name="Cooke R."/>
            <person name="Laudie M."/>
            <person name="Berger-Llauro C."/>
            <person name="Purnelle B."/>
            <person name="Masuy D."/>
            <person name="de Haan M."/>
            <person name="Maarse A.C."/>
            <person name="Alcaraz J.-P."/>
            <person name="Cottet A."/>
            <person name="Casacuberta E."/>
            <person name="Monfort A."/>
            <person name="Argiriou A."/>
            <person name="Flores M."/>
            <person name="Liguori R."/>
            <person name="Vitale D."/>
            <person name="Mannhaupt G."/>
            <person name="Haase D."/>
            <person name="Schoof H."/>
            <person name="Rudd S."/>
            <person name="Zaccaria P."/>
            <person name="Mewes H.-W."/>
            <person name="Mayer K.F.X."/>
            <person name="Kaul S."/>
            <person name="Town C.D."/>
            <person name="Koo H.L."/>
            <person name="Tallon L.J."/>
            <person name="Jenkins J."/>
            <person name="Rooney T."/>
            <person name="Rizzo M."/>
            <person name="Walts A."/>
            <person name="Utterback T."/>
            <person name="Fujii C.Y."/>
            <person name="Shea T.P."/>
            <person name="Creasy T.H."/>
            <person name="Haas B."/>
            <person name="Maiti R."/>
            <person name="Wu D."/>
            <person name="Peterson J."/>
            <person name="Van Aken S."/>
            <person name="Pai G."/>
            <person name="Militscher J."/>
            <person name="Sellers P."/>
            <person name="Gill J.E."/>
            <person name="Feldblyum T.V."/>
            <person name="Preuss D."/>
            <person name="Lin X."/>
            <person name="Nierman W.C."/>
            <person name="Salzberg S.L."/>
            <person name="White O."/>
            <person name="Venter J.C."/>
            <person name="Fraser C.M."/>
            <person name="Kaneko T."/>
            <person name="Nakamura Y."/>
            <person name="Sato S."/>
            <person name="Kato T."/>
            <person name="Asamizu E."/>
            <person name="Sasamoto S."/>
            <person name="Kimura T."/>
            <person name="Idesawa K."/>
            <person name="Kawashima K."/>
            <person name="Kishida Y."/>
            <person name="Kiyokawa C."/>
            <person name="Kohara M."/>
            <person name="Matsumoto M."/>
            <person name="Matsuno A."/>
            <person name="Muraki A."/>
            <person name="Nakayama S."/>
            <person name="Nakazaki N."/>
            <person name="Shinpo S."/>
            <person name="Takeuchi C."/>
            <person name="Wada T."/>
            <person name="Watanabe A."/>
            <person name="Yamada M."/>
            <person name="Yasuda M."/>
            <person name="Tabata S."/>
        </authorList>
    </citation>
    <scope>NUCLEOTIDE SEQUENCE [LARGE SCALE GENOMIC DNA]</scope>
    <source>
        <strain>cv. Columbia</strain>
    </source>
</reference>
<reference key="4">
    <citation type="journal article" date="2017" name="Plant J.">
        <title>Araport11: a complete reannotation of the Arabidopsis thaliana reference genome.</title>
        <authorList>
            <person name="Cheng C.Y."/>
            <person name="Krishnakumar V."/>
            <person name="Chan A.P."/>
            <person name="Thibaud-Nissen F."/>
            <person name="Schobel S."/>
            <person name="Town C.D."/>
        </authorList>
    </citation>
    <scope>GENOME REANNOTATION</scope>
    <source>
        <strain>cv. Columbia</strain>
    </source>
</reference>
<reference key="5">
    <citation type="submission" date="2006-08" db="EMBL/GenBank/DDBJ databases">
        <title>Arabidopsis ORF Clones.</title>
        <authorList>
            <person name="Quinitio C."/>
            <person name="Chen H."/>
            <person name="Kim C.J."/>
            <person name="Shinn P."/>
            <person name="Ecker J.R."/>
        </authorList>
    </citation>
    <scope>NUCLEOTIDE SEQUENCE [LARGE SCALE MRNA]</scope>
    <source>
        <strain>cv. Columbia</strain>
    </source>
</reference>
<reference key="6">
    <citation type="journal article" date="1998" name="Plant J.">
        <title>Towards functional characterisation of the members of the R2R3-MYB gene family from Arabidopsis thaliana.</title>
        <authorList>
            <person name="Kranz H.D."/>
            <person name="Denekamp M."/>
            <person name="Greco R."/>
            <person name="Jin H.-L."/>
            <person name="Leyva A."/>
            <person name="Meissner R.C."/>
            <person name="Petroni K."/>
            <person name="Urzainqui A."/>
            <person name="Bevan M."/>
            <person name="Martin C."/>
            <person name="Smeekens S."/>
            <person name="Tonelli C."/>
            <person name="Paz-Ares J."/>
            <person name="Weisshaar B."/>
        </authorList>
    </citation>
    <scope>GENE FAMILY</scope>
    <scope>NOMENCLATURE</scope>
    <source>
        <strain>cv. Columbia</strain>
    </source>
</reference>
<reference key="7">
    <citation type="journal article" date="2001" name="Curr. Opin. Plant Biol.">
        <title>The R2R3-MYB gene family in Arabidopsis thaliana.</title>
        <authorList>
            <person name="Stracke R."/>
            <person name="Werber M."/>
            <person name="Weisshaar B."/>
        </authorList>
    </citation>
    <scope>GENE FAMILY</scope>
    <scope>NOMENCLATURE</scope>
    <source>
        <strain>cv. Columbia</strain>
    </source>
</reference>
<reference key="8">
    <citation type="journal article" date="2006" name="Plant Mol. Biol.">
        <title>The MYB transcription factor superfamily of Arabidopsis: expression analysis and phylogenetic comparison with the rice MYB family.</title>
        <authorList>
            <person name="Chen Y."/>
            <person name="Yang X."/>
            <person name="He K."/>
            <person name="Liu M."/>
            <person name="Li J."/>
            <person name="Gao Z."/>
            <person name="Lin Z."/>
            <person name="Zhang Y."/>
            <person name="Wang X."/>
            <person name="Qiu X."/>
            <person name="Shen Y."/>
            <person name="Zhang L."/>
            <person name="Deng X."/>
            <person name="Luo J."/>
            <person name="Deng X.-W."/>
            <person name="Chen Z."/>
            <person name="Gu H."/>
            <person name="Qu L.-J."/>
        </authorList>
    </citation>
    <scope>INDUCTION BY SALICYLIC ACID</scope>
    <scope>GENE FAMILY</scope>
</reference>